<keyword id="KW-0169">Cobalamin biosynthesis</keyword>
<keyword id="KW-0413">Isomerase</keyword>
<keyword id="KW-0489">Methyltransferase</keyword>
<keyword id="KW-0511">Multifunctional enzyme</keyword>
<keyword id="KW-1185">Reference proteome</keyword>
<keyword id="KW-0949">S-adenosyl-L-methionine</keyword>
<keyword id="KW-0808">Transferase</keyword>
<evidence type="ECO:0000250" key="1"/>
<evidence type="ECO:0000305" key="2"/>
<comment type="function">
    <text evidence="1">Bifunctional enzyme with a methyltransferase domain that catalyzes the ring contraction and methylation of C-17 in cobalt-factor III to form cobalt-factor IV, and an isomerase domain that catalyzes the conversion of cobalt-precorrin-8 to cobyrinate.</text>
</comment>
<comment type="catalytic activity">
    <reaction>
        <text>Co(II)-factor III + S-adenosyl-L-methionine + H(+) = Co(II)-factor IV + S-adenosyl-L-homocysteine</text>
        <dbReference type="Rhea" id="RHEA:45852"/>
        <dbReference type="ChEBI" id="CHEBI:15378"/>
        <dbReference type="ChEBI" id="CHEBI:57856"/>
        <dbReference type="ChEBI" id="CHEBI:59789"/>
        <dbReference type="ChEBI" id="CHEBI:73299"/>
        <dbReference type="ChEBI" id="CHEBI:85471"/>
    </reaction>
</comment>
<comment type="catalytic activity">
    <reaction>
        <text>Co-precorrin-8X = cob(II)yrinate</text>
        <dbReference type="Rhea" id="RHEA:16209"/>
        <dbReference type="ChEBI" id="CHEBI:58894"/>
        <dbReference type="ChEBI" id="CHEBI:70792"/>
        <dbReference type="EC" id="5.4.99.60"/>
    </reaction>
</comment>
<comment type="pathway">
    <text>Cofactor biosynthesis; adenosylcobalamin biosynthesis; cob(II)yrinate a,c-diamide from sirohydrochlorin (anaerobic route): step 3/10.</text>
</comment>
<comment type="pathway">
    <text>Cofactor biosynthesis; adenosylcobalamin biosynthesis; cob(II)yrinate a,c-diamide from sirohydrochlorin (anaerobic route): step 9/10.</text>
</comment>
<comment type="similarity">
    <text evidence="2">In the N-terminal section; belongs to the precorrin methyltransferase family.</text>
</comment>
<comment type="similarity">
    <text evidence="2">In the C-terminal section; belongs to the CobH family.</text>
</comment>
<organism>
    <name type="scientific">Archaeoglobus fulgidus (strain ATCC 49558 / DSM 4304 / JCM 9628 / NBRC 100126 / VC-16)</name>
    <dbReference type="NCBI Taxonomy" id="224325"/>
    <lineage>
        <taxon>Archaea</taxon>
        <taxon>Methanobacteriati</taxon>
        <taxon>Methanobacteriota</taxon>
        <taxon>Archaeoglobi</taxon>
        <taxon>Archaeoglobales</taxon>
        <taxon>Archaeoglobaceae</taxon>
        <taxon>Archaeoglobus</taxon>
    </lineage>
</organism>
<accession>O29534</accession>
<proteinExistence type="inferred from homology"/>
<reference key="1">
    <citation type="journal article" date="1997" name="Nature">
        <title>The complete genome sequence of the hyperthermophilic, sulphate-reducing archaeon Archaeoglobus fulgidus.</title>
        <authorList>
            <person name="Klenk H.-P."/>
            <person name="Clayton R.A."/>
            <person name="Tomb J.-F."/>
            <person name="White O."/>
            <person name="Nelson K.E."/>
            <person name="Ketchum K.A."/>
            <person name="Dodson R.J."/>
            <person name="Gwinn M.L."/>
            <person name="Hickey E.K."/>
            <person name="Peterson J.D."/>
            <person name="Richardson D.L."/>
            <person name="Kerlavage A.R."/>
            <person name="Graham D.E."/>
            <person name="Kyrpides N.C."/>
            <person name="Fleischmann R.D."/>
            <person name="Quackenbush J."/>
            <person name="Lee N.H."/>
            <person name="Sutton G.G."/>
            <person name="Gill S.R."/>
            <person name="Kirkness E.F."/>
            <person name="Dougherty B.A."/>
            <person name="McKenney K."/>
            <person name="Adams M.D."/>
            <person name="Loftus B.J."/>
            <person name="Peterson S.N."/>
            <person name="Reich C.I."/>
            <person name="McNeil L.K."/>
            <person name="Badger J.H."/>
            <person name="Glodek A."/>
            <person name="Zhou L."/>
            <person name="Overbeek R."/>
            <person name="Gocayne J.D."/>
            <person name="Weidman J.F."/>
            <person name="McDonald L.A."/>
            <person name="Utterback T.R."/>
            <person name="Cotton M.D."/>
            <person name="Spriggs T."/>
            <person name="Artiach P."/>
            <person name="Kaine B.P."/>
            <person name="Sykes S.M."/>
            <person name="Sadow P.W."/>
            <person name="D'Andrea K.P."/>
            <person name="Bowman C."/>
            <person name="Fujii C."/>
            <person name="Garland S.A."/>
            <person name="Mason T.M."/>
            <person name="Olsen G.J."/>
            <person name="Fraser C.M."/>
            <person name="Smith H.O."/>
            <person name="Woese C.R."/>
            <person name="Venter J.C."/>
        </authorList>
    </citation>
    <scope>NUCLEOTIDE SEQUENCE [LARGE SCALE GENOMIC DNA]</scope>
    <source>
        <strain>ATCC 49558 / DSM 4304 / JCM 9628 / NBRC 100126 / VC-16</strain>
    </source>
</reference>
<dbReference type="EC" id="2.1.1.-"/>
<dbReference type="EC" id="5.4.99.60"/>
<dbReference type="EMBL" id="AE000782">
    <property type="protein sequence ID" value="AAB90518.1"/>
    <property type="molecule type" value="Genomic_DNA"/>
</dbReference>
<dbReference type="PIR" id="D69340">
    <property type="entry name" value="D69340"/>
</dbReference>
<dbReference type="RefSeq" id="WP_010878227.1">
    <property type="nucleotide sequence ID" value="NC_000917.1"/>
</dbReference>
<dbReference type="SMR" id="O29534"/>
<dbReference type="STRING" id="224325.AF_0724"/>
<dbReference type="PaxDb" id="224325-AF_0724"/>
<dbReference type="EnsemblBacteria" id="AAB90518">
    <property type="protein sequence ID" value="AAB90518"/>
    <property type="gene ID" value="AF_0724"/>
</dbReference>
<dbReference type="GeneID" id="1483942"/>
<dbReference type="KEGG" id="afu:AF_0724"/>
<dbReference type="eggNOG" id="arCOG00647">
    <property type="taxonomic scope" value="Archaea"/>
</dbReference>
<dbReference type="eggNOG" id="arCOG02247">
    <property type="taxonomic scope" value="Archaea"/>
</dbReference>
<dbReference type="HOGENOM" id="CLU_573257_0_0_2"/>
<dbReference type="OrthoDB" id="35891at2157"/>
<dbReference type="PhylomeDB" id="O29534"/>
<dbReference type="UniPathway" id="UPA00148">
    <property type="reaction ID" value="UER00225"/>
</dbReference>
<dbReference type="UniPathway" id="UPA00148">
    <property type="reaction ID" value="UER00230"/>
</dbReference>
<dbReference type="Proteomes" id="UP000002199">
    <property type="component" value="Chromosome"/>
</dbReference>
<dbReference type="GO" id="GO:0043778">
    <property type="term" value="F:cobalt-precorrin-8 methylmutase activity"/>
    <property type="evidence" value="ECO:0007669"/>
    <property type="project" value="UniProtKB-EC"/>
</dbReference>
<dbReference type="GO" id="GO:0008168">
    <property type="term" value="F:methyltransferase activity"/>
    <property type="evidence" value="ECO:0007669"/>
    <property type="project" value="UniProtKB-KW"/>
</dbReference>
<dbReference type="GO" id="GO:0016993">
    <property type="term" value="F:precorrin-8X methylmutase activity"/>
    <property type="evidence" value="ECO:0007669"/>
    <property type="project" value="InterPro"/>
</dbReference>
<dbReference type="GO" id="GO:0009236">
    <property type="term" value="P:cobalamin biosynthetic process"/>
    <property type="evidence" value="ECO:0007669"/>
    <property type="project" value="UniProtKB-UniPathway"/>
</dbReference>
<dbReference type="GO" id="GO:0032259">
    <property type="term" value="P:methylation"/>
    <property type="evidence" value="ECO:0007669"/>
    <property type="project" value="UniProtKB-KW"/>
</dbReference>
<dbReference type="CDD" id="cd11646">
    <property type="entry name" value="Precorrin_3B_C17_MT"/>
    <property type="match status" value="1"/>
</dbReference>
<dbReference type="Gene3D" id="3.40.50.10230">
    <property type="entry name" value="Cobalamin biosynthesis CobH/CbiC, precorrin-8X methylmutase"/>
    <property type="match status" value="1"/>
</dbReference>
<dbReference type="Gene3D" id="3.40.1010.10">
    <property type="entry name" value="Cobalt-precorrin-4 Transmethylase, Domain 1"/>
    <property type="match status" value="1"/>
</dbReference>
<dbReference type="Gene3D" id="3.30.950.10">
    <property type="entry name" value="Methyltransferase, Cobalt-precorrin-4 Transmethylase, Domain 2"/>
    <property type="match status" value="1"/>
</dbReference>
<dbReference type="InterPro" id="IPR000878">
    <property type="entry name" value="4pyrrol_Mease"/>
</dbReference>
<dbReference type="InterPro" id="IPR035996">
    <property type="entry name" value="4pyrrol_Methylase_sf"/>
</dbReference>
<dbReference type="InterPro" id="IPR014777">
    <property type="entry name" value="4pyrrole_Mease_sub1"/>
</dbReference>
<dbReference type="InterPro" id="IPR014776">
    <property type="entry name" value="4pyrrole_Mease_sub2"/>
</dbReference>
<dbReference type="InterPro" id="IPR014422">
    <property type="entry name" value="Cbl_synth_bifunc_CbiH/CbiC"/>
</dbReference>
<dbReference type="InterPro" id="IPR003722">
    <property type="entry name" value="Cbl_synth_CobH/CbiC"/>
</dbReference>
<dbReference type="InterPro" id="IPR006363">
    <property type="entry name" value="Cbl_synth_CobJ/CibH_dom"/>
</dbReference>
<dbReference type="InterPro" id="IPR036588">
    <property type="entry name" value="CobH/CbiC_sf"/>
</dbReference>
<dbReference type="InterPro" id="IPR051810">
    <property type="entry name" value="Precorrin_MeTrfase"/>
</dbReference>
<dbReference type="NCBIfam" id="TIGR01466">
    <property type="entry name" value="cobJ_cbiH"/>
    <property type="match status" value="1"/>
</dbReference>
<dbReference type="PANTHER" id="PTHR47036">
    <property type="entry name" value="COBALT-FACTOR III C(17)-METHYLTRANSFERASE-RELATED"/>
    <property type="match status" value="1"/>
</dbReference>
<dbReference type="PANTHER" id="PTHR47036:SF1">
    <property type="entry name" value="COBALT-FACTOR III C(17)-METHYLTRANSFERASE-RELATED"/>
    <property type="match status" value="1"/>
</dbReference>
<dbReference type="Pfam" id="PF02570">
    <property type="entry name" value="CbiC"/>
    <property type="match status" value="1"/>
</dbReference>
<dbReference type="Pfam" id="PF00590">
    <property type="entry name" value="TP_methylase"/>
    <property type="match status" value="1"/>
</dbReference>
<dbReference type="PIRSF" id="PIRSF004874">
    <property type="entry name" value="Prcrn_mtase_isom"/>
    <property type="match status" value="1"/>
</dbReference>
<dbReference type="SUPFAM" id="SSF63965">
    <property type="entry name" value="Precorrin-8X methylmutase CbiC/CobH"/>
    <property type="match status" value="1"/>
</dbReference>
<dbReference type="SUPFAM" id="SSF53790">
    <property type="entry name" value="Tetrapyrrole methylase"/>
    <property type="match status" value="1"/>
</dbReference>
<name>CBIHC_ARCFU</name>
<feature type="chain" id="PRO_0000150405" description="Cobalamin biosynthesis protein CbiHC">
    <location>
        <begin position="1"/>
        <end position="446"/>
    </location>
</feature>
<feature type="region of interest" description="Cobalt-factor III C(17)-methyltransferase">
    <location>
        <begin position="1"/>
        <end position="246"/>
    </location>
</feature>
<feature type="region of interest" description="Cobalt-precorrin-8 methylmutase">
    <location>
        <begin position="247"/>
        <end position="446"/>
    </location>
</feature>
<gene>
    <name type="primary">cbiHC</name>
    <name type="synonym">cobJH</name>
    <name type="ordered locus">AF_0724</name>
</gene>
<protein>
    <recommendedName>
        <fullName>Cobalamin biosynthesis protein CbiHC</fullName>
    </recommendedName>
    <domain>
        <recommendedName>
            <fullName>Probable cobalt-factor III C(17)-methyltransferase</fullName>
            <ecNumber>2.1.1.-</ecNumber>
        </recommendedName>
        <alternativeName>
            <fullName>Cobalt-precorrin-3 methyltransferase</fullName>
            <shortName>Cobalt-precorrin-3 methylase</shortName>
        </alternativeName>
    </domain>
    <domain>
        <recommendedName>
            <fullName>Cobalt-precorrin-8 methylmutase</fullName>
            <ecNumber>5.4.99.60</ecNumber>
        </recommendedName>
        <alternativeName>
            <fullName>Cobalt-precorrin isomerase</fullName>
        </alternativeName>
    </domain>
</protein>
<sequence length="446" mass="48678">MLLLPSRGKLYVVGIGPGKEELMTLKAKRAIEEADYIVGYQTYVDRISHLIEGKKVVTTPMRKELDRVKIALELAKEHVVALISGGDPSIYGILPLVIEYAVEKKVDVEIEAIPGVTAASAASSLLGSAISGDFAVVSLSDLLVPWSVVEKRLLYALSGDFVVAIYNPSSRRRKENFRKAMEIVRRFRGDAWVGVVRNAGREGQQVEIRRVSEVDEVDMNTILIVGNSETKVVDGKMFTPRGYSNKYNIGEKRRAERMGASTKGGMEVARRSEEILRSFYPEEGLRGDIIRRCIATTGDVTIKDVIRFVGDTEEGVRALRDGCRIIADVHMVRAGLRRDAIVAVDFARGDDTRTASGIRNLAEMIEGSLVAIGNSPSAAFALCEVAEKHPPRFIVATPVGFVNAAESKEMVRKLPVPSVTTEGPRGGSGICAAIVNCLIEHADRPD</sequence>